<keyword id="KW-0002">3D-structure</keyword>
<keyword id="KW-0025">Alternative splicing</keyword>
<keyword id="KW-0256">Endoplasmic reticulum</keyword>
<keyword id="KW-0931">ER-Golgi transport</keyword>
<keyword id="KW-0333">Golgi apparatus</keyword>
<keyword id="KW-0449">Lipoprotein</keyword>
<keyword id="KW-0564">Palmitate</keyword>
<keyword id="KW-1267">Proteomics identification</keyword>
<keyword id="KW-1185">Reference proteome</keyword>
<keyword id="KW-0813">Transport</keyword>
<comment type="function">
    <text>May play a role in vesicular transport from endoplasmic reticulum to Golgi.</text>
</comment>
<comment type="subunit">
    <text evidence="2 3 4 5 6 7">Homodimer. Component of the multisubunit transport protein particle (TRAPP) complex, which includes at least TRAPPC2, TRAPPC2L, TRAPPC3, TRAPPC3L, TRAPPC4, TRAPPC5, TRAPPC8, TRAPPC9, TRAPPC10, TRAPPC11 and TRAPPC12. Heterodimer with TRAPPC6A. The heterodimer TRAPPC3-TRAPPC6A interacts with TRAPPC2L (PubMed:11805826, PubMed:15692564, PubMed:16262728, PubMed:19416478, PubMed:21525244). Heterodimer with TRAPPC6b. The heterodimer TRAPPC6B-TRAPPC3 interacts with TRAPPC1 likely providing a core for TRAPP complex formation (PubMed:16828797).</text>
</comment>
<comment type="interaction">
    <interactant intactId="EBI-743566">
        <id>O43617</id>
    </interactant>
    <interactant intactId="EBI-742388">
        <id>Q9H8W4</id>
        <label>PLEKHF2</label>
    </interactant>
    <organismsDiffer>false</organismsDiffer>
    <experiments>3</experiments>
</comment>
<comment type="interaction">
    <interactant intactId="EBI-743566">
        <id>O43617</id>
    </interactant>
    <interactant intactId="EBI-6160554">
        <id>Q9Y5R8</id>
        <label>TRAPPC1</label>
    </interactant>
    <organismsDiffer>false</organismsDiffer>
    <experiments>9</experiments>
</comment>
<comment type="interaction">
    <interactant intactId="EBI-743566">
        <id>O43617</id>
    </interactant>
    <interactant intactId="EBI-2857298">
        <id>A5PLN9</id>
        <label>TRAPPC13</label>
    </interactant>
    <organismsDiffer>false</organismsDiffer>
    <experiments>2</experiments>
</comment>
<comment type="interaction">
    <interactant intactId="EBI-743566">
        <id>O43617</id>
    </interactant>
    <interactant intactId="EBI-11961968">
        <id>P0DI81-3</id>
        <label>TRAPPC2</label>
    </interactant>
    <organismsDiffer>false</organismsDiffer>
    <experiments>8</experiments>
</comment>
<comment type="interaction">
    <interactant intactId="EBI-743566">
        <id>O43617</id>
    </interactant>
    <interactant intactId="EBI-747601">
        <id>Q9UL33</id>
        <label>TRAPPC2L</label>
    </interactant>
    <organismsDiffer>false</organismsDiffer>
    <experiments>8</experiments>
</comment>
<comment type="interaction">
    <interactant intactId="EBI-743566">
        <id>O43617</id>
    </interactant>
    <interactant intactId="EBI-11119202">
        <id>Q9UL33-2</id>
        <label>TRAPPC2L</label>
    </interactant>
    <organismsDiffer>false</organismsDiffer>
    <experiments>7</experiments>
</comment>
<comment type="interaction">
    <interactant intactId="EBI-743566">
        <id>O43617</id>
    </interactant>
    <interactant intactId="EBI-3246160">
        <id>Q8IUR0</id>
        <label>TRAPPC5</label>
    </interactant>
    <organismsDiffer>false</organismsDiffer>
    <experiments>9</experiments>
</comment>
<comment type="interaction">
    <interactant intactId="EBI-743566">
        <id>O43617</id>
    </interactant>
    <interactant intactId="EBI-743573">
        <id>O75865</id>
        <label>TRAPPC6A</label>
    </interactant>
    <organismsDiffer>false</organismsDiffer>
    <experiments>9</experiments>
</comment>
<comment type="interaction">
    <interactant intactId="EBI-743566">
        <id>O43617</id>
    </interactant>
    <interactant intactId="EBI-8451480">
        <id>O75865-2</id>
        <label>TRAPPC6A</label>
    </interactant>
    <organismsDiffer>false</organismsDiffer>
    <experiments>6</experiments>
</comment>
<comment type="interaction">
    <interactant intactId="EBI-743566">
        <id>O43617</id>
    </interactant>
    <interactant intactId="EBI-6160531">
        <id>Q86SZ2</id>
        <label>TRAPPC6B</label>
    </interactant>
    <organismsDiffer>false</organismsDiffer>
    <experiments>3</experiments>
</comment>
<comment type="interaction">
    <interactant intactId="EBI-743566">
        <id>O43617</id>
    </interactant>
    <interactant intactId="EBI-2820056">
        <id>Q9Y2L5</id>
        <label>TRAPPC8</label>
    </interactant>
    <organismsDiffer>false</organismsDiffer>
    <experiments>2</experiments>
</comment>
<comment type="subcellular location">
    <subcellularLocation>
        <location evidence="1">Golgi apparatus</location>
        <location evidence="1">cis-Golgi network</location>
    </subcellularLocation>
    <subcellularLocation>
        <location evidence="1">Endoplasmic reticulum</location>
    </subcellularLocation>
</comment>
<comment type="alternative products">
    <event type="alternative splicing"/>
    <isoform>
        <id>O43617-1</id>
        <name>1</name>
        <sequence type="displayed"/>
    </isoform>
    <isoform>
        <id>O43617-2</id>
        <name>2</name>
        <sequence type="described" ref="VSP_047015"/>
    </isoform>
</comment>
<comment type="similarity">
    <text evidence="10">Belongs to the TRAPP small subunits family. BET3 subfamily.</text>
</comment>
<name>TPPC3_HUMAN</name>
<dbReference type="EMBL" id="AJ224335">
    <property type="protein sequence ID" value="CAA11902.1"/>
    <property type="molecule type" value="mRNA"/>
</dbReference>
<dbReference type="EMBL" id="AF041432">
    <property type="protein sequence ID" value="AAB96936.1"/>
    <property type="molecule type" value="mRNA"/>
</dbReference>
<dbReference type="EMBL" id="AY007139">
    <property type="protein sequence ID" value="AAG02000.1"/>
    <property type="molecule type" value="mRNA"/>
</dbReference>
<dbReference type="EMBL" id="AK315610">
    <property type="protein sequence ID" value="BAG37979.1"/>
    <property type="molecule type" value="mRNA"/>
</dbReference>
<dbReference type="EMBL" id="AC114484">
    <property type="status" value="NOT_ANNOTATED_CDS"/>
    <property type="molecule type" value="Genomic_DNA"/>
</dbReference>
<dbReference type="EMBL" id="CH471059">
    <property type="protein sequence ID" value="EAX07385.1"/>
    <property type="molecule type" value="Genomic_DNA"/>
</dbReference>
<dbReference type="EMBL" id="CH471059">
    <property type="protein sequence ID" value="EAX07386.1"/>
    <property type="molecule type" value="Genomic_DNA"/>
</dbReference>
<dbReference type="EMBL" id="CH471059">
    <property type="protein sequence ID" value="EAX07387.1"/>
    <property type="molecule type" value="Genomic_DNA"/>
</dbReference>
<dbReference type="EMBL" id="BC007662">
    <property type="protein sequence ID" value="AAH07662.1"/>
    <property type="molecule type" value="mRNA"/>
</dbReference>
<dbReference type="CCDS" id="CCDS404.1">
    <molecule id="O43617-1"/>
</dbReference>
<dbReference type="CCDS" id="CCDS59194.1">
    <molecule id="O43617-2"/>
</dbReference>
<dbReference type="RefSeq" id="NP_001257823.1">
    <property type="nucleotide sequence ID" value="NM_001270894.1"/>
</dbReference>
<dbReference type="RefSeq" id="NP_001257824.1">
    <molecule id="O43617-2"/>
    <property type="nucleotide sequence ID" value="NM_001270895.2"/>
</dbReference>
<dbReference type="RefSeq" id="NP_001257825.1">
    <molecule id="O43617-2"/>
    <property type="nucleotide sequence ID" value="NM_001270896.2"/>
</dbReference>
<dbReference type="RefSeq" id="NP_001257826.1">
    <property type="nucleotide sequence ID" value="NM_001270897.1"/>
</dbReference>
<dbReference type="RefSeq" id="NP_055223.1">
    <molecule id="O43617-1"/>
    <property type="nucleotide sequence ID" value="NM_014408.5"/>
</dbReference>
<dbReference type="PDB" id="1SZ7">
    <property type="method" value="X-ray"/>
    <property type="resolution" value="1.55 A"/>
    <property type="chains" value="A=2-180"/>
</dbReference>
<dbReference type="PDB" id="2C0J">
    <property type="method" value="X-ray"/>
    <property type="resolution" value="2.20 A"/>
    <property type="chains" value="A=15-175"/>
</dbReference>
<dbReference type="PDB" id="2CFH">
    <property type="method" value="X-ray"/>
    <property type="resolution" value="2.30 A"/>
    <property type="chains" value="A/B=1-180"/>
</dbReference>
<dbReference type="PDB" id="3KXC">
    <property type="method" value="X-ray"/>
    <property type="resolution" value="2.00 A"/>
    <property type="chains" value="A=1-180"/>
</dbReference>
<dbReference type="PDBsum" id="1SZ7"/>
<dbReference type="PDBsum" id="2C0J"/>
<dbReference type="PDBsum" id="2CFH"/>
<dbReference type="PDBsum" id="3KXC"/>
<dbReference type="SMR" id="O43617"/>
<dbReference type="BioGRID" id="117997">
    <property type="interactions" value="85"/>
</dbReference>
<dbReference type="ComplexPortal" id="CPX-4749">
    <property type="entry name" value="TRAPP II complex, TRAPPC2 variant"/>
</dbReference>
<dbReference type="ComplexPortal" id="CPX-4750">
    <property type="entry name" value="TRAPP III complex, TRAPPC2 variant"/>
</dbReference>
<dbReference type="ComplexPortal" id="CPX-6902">
    <property type="entry name" value="TRAPP II complex, TRAPPC2B variant"/>
</dbReference>
<dbReference type="ComplexPortal" id="CPX-6903">
    <property type="entry name" value="TRAPP III complex, TRAPPC2B variant"/>
</dbReference>
<dbReference type="CORUM" id="O43617"/>
<dbReference type="DIP" id="DIP-47627N"/>
<dbReference type="FunCoup" id="O43617">
    <property type="interactions" value="3087"/>
</dbReference>
<dbReference type="IntAct" id="O43617">
    <property type="interactions" value="43"/>
</dbReference>
<dbReference type="MINT" id="O43617"/>
<dbReference type="STRING" id="9606.ENSP00000480332"/>
<dbReference type="DrugBank" id="DB08231">
    <property type="generic name" value="Myristic acid"/>
</dbReference>
<dbReference type="DrugBank" id="DB03796">
    <property type="generic name" value="Palmitic Acid"/>
</dbReference>
<dbReference type="DrugBank" id="DB08342">
    <property type="generic name" value="S-palmitoyl-L-cysteine"/>
</dbReference>
<dbReference type="iPTMnet" id="O43617"/>
<dbReference type="PhosphoSitePlus" id="O43617"/>
<dbReference type="SwissPalm" id="O43617"/>
<dbReference type="BioMuta" id="TRAPPC3"/>
<dbReference type="jPOST" id="O43617"/>
<dbReference type="MassIVE" id="O43617"/>
<dbReference type="PaxDb" id="9606-ENSP00000480332"/>
<dbReference type="PeptideAtlas" id="O43617"/>
<dbReference type="ProteomicsDB" id="49084">
    <molecule id="O43617-1"/>
</dbReference>
<dbReference type="ProteomicsDB" id="918"/>
<dbReference type="Pumba" id="O43617"/>
<dbReference type="TopDownProteomics" id="O43617-1">
    <molecule id="O43617-1"/>
</dbReference>
<dbReference type="Antibodypedia" id="31641">
    <property type="antibodies" value="221 antibodies from 28 providers"/>
</dbReference>
<dbReference type="DNASU" id="27095"/>
<dbReference type="Ensembl" id="ENST00000373162.5">
    <molecule id="O43617-2"/>
    <property type="protein sequence ID" value="ENSP00000362256.1"/>
    <property type="gene ID" value="ENSG00000054116.12"/>
</dbReference>
<dbReference type="Ensembl" id="ENST00000373163.5">
    <molecule id="O43617-2"/>
    <property type="protein sequence ID" value="ENSP00000362257.1"/>
    <property type="gene ID" value="ENSG00000054116.12"/>
</dbReference>
<dbReference type="Ensembl" id="ENST00000373166.8">
    <molecule id="O43617-1"/>
    <property type="protein sequence ID" value="ENSP00000362261.3"/>
    <property type="gene ID" value="ENSG00000054116.12"/>
</dbReference>
<dbReference type="Ensembl" id="ENST00000617904.4">
    <molecule id="O43617-2"/>
    <property type="protein sequence ID" value="ENSP00000480648.1"/>
    <property type="gene ID" value="ENSG00000054116.12"/>
</dbReference>
<dbReference type="GeneID" id="27095"/>
<dbReference type="KEGG" id="hsa:27095"/>
<dbReference type="MANE-Select" id="ENST00000373166.8">
    <property type="protein sequence ID" value="ENSP00000362261.3"/>
    <property type="RefSeq nucleotide sequence ID" value="NM_014408.5"/>
    <property type="RefSeq protein sequence ID" value="NP_055223.1"/>
</dbReference>
<dbReference type="UCSC" id="uc001bzx.5">
    <molecule id="O43617-1"/>
    <property type="organism name" value="human"/>
</dbReference>
<dbReference type="AGR" id="HGNC:19942"/>
<dbReference type="CTD" id="27095"/>
<dbReference type="DisGeNET" id="27095"/>
<dbReference type="GeneCards" id="TRAPPC3"/>
<dbReference type="HGNC" id="HGNC:19942">
    <property type="gene designation" value="TRAPPC3"/>
</dbReference>
<dbReference type="HPA" id="ENSG00000054116">
    <property type="expression patterns" value="Low tissue specificity"/>
</dbReference>
<dbReference type="MalaCards" id="TRAPPC3"/>
<dbReference type="MIM" id="610955">
    <property type="type" value="gene"/>
</dbReference>
<dbReference type="neXtProt" id="NX_O43617"/>
<dbReference type="OpenTargets" id="ENSG00000054116"/>
<dbReference type="PharmGKB" id="PA134972272"/>
<dbReference type="VEuPathDB" id="HostDB:ENSG00000054116"/>
<dbReference type="eggNOG" id="KOG3330">
    <property type="taxonomic scope" value="Eukaryota"/>
</dbReference>
<dbReference type="GeneTree" id="ENSGT00390000003880"/>
<dbReference type="HOGENOM" id="CLU_087110_2_0_1"/>
<dbReference type="InParanoid" id="O43617"/>
<dbReference type="OrthoDB" id="10262857at2759"/>
<dbReference type="PAN-GO" id="O43617">
    <property type="GO annotations" value="5 GO annotations based on evolutionary models"/>
</dbReference>
<dbReference type="PhylomeDB" id="O43617"/>
<dbReference type="TreeFam" id="TF300091"/>
<dbReference type="PathwayCommons" id="O43617"/>
<dbReference type="Reactome" id="R-HSA-204005">
    <property type="pathway name" value="COPII-mediated vesicle transport"/>
</dbReference>
<dbReference type="Reactome" id="R-HSA-8876198">
    <property type="pathway name" value="RAB GEFs exchange GTP for GDP on RABs"/>
</dbReference>
<dbReference type="SignaLink" id="O43617"/>
<dbReference type="BioGRID-ORCS" id="27095">
    <property type="hits" value="821 hits in 1169 CRISPR screens"/>
</dbReference>
<dbReference type="CD-CODE" id="FB4E32DD">
    <property type="entry name" value="Presynaptic clusters and postsynaptic densities"/>
</dbReference>
<dbReference type="ChiTaRS" id="TRAPPC3">
    <property type="organism name" value="human"/>
</dbReference>
<dbReference type="EvolutionaryTrace" id="O43617"/>
<dbReference type="GeneWiki" id="TRAPPC3"/>
<dbReference type="GenomeRNAi" id="27095"/>
<dbReference type="Pharos" id="O43617">
    <property type="development level" value="Tbio"/>
</dbReference>
<dbReference type="PRO" id="PR:O43617"/>
<dbReference type="Proteomes" id="UP000005640">
    <property type="component" value="Chromosome 1"/>
</dbReference>
<dbReference type="RNAct" id="O43617">
    <property type="molecule type" value="protein"/>
</dbReference>
<dbReference type="Bgee" id="ENSG00000054116">
    <property type="expression patterns" value="Expressed in right adrenal gland and 216 other cell types or tissues"/>
</dbReference>
<dbReference type="ExpressionAtlas" id="O43617">
    <property type="expression patterns" value="baseline and differential"/>
</dbReference>
<dbReference type="GO" id="GO:0033106">
    <property type="term" value="C:cis-Golgi network membrane"/>
    <property type="evidence" value="ECO:0000318"/>
    <property type="project" value="GO_Central"/>
</dbReference>
<dbReference type="GO" id="GO:0005737">
    <property type="term" value="C:cytoplasm"/>
    <property type="evidence" value="ECO:0000303"/>
    <property type="project" value="ComplexPortal"/>
</dbReference>
<dbReference type="GO" id="GO:0005829">
    <property type="term" value="C:cytosol"/>
    <property type="evidence" value="ECO:0000318"/>
    <property type="project" value="GO_Central"/>
</dbReference>
<dbReference type="GO" id="GO:0005783">
    <property type="term" value="C:endoplasmic reticulum"/>
    <property type="evidence" value="ECO:0007669"/>
    <property type="project" value="UniProtKB-SubCell"/>
</dbReference>
<dbReference type="GO" id="GO:0000139">
    <property type="term" value="C:Golgi membrane"/>
    <property type="evidence" value="ECO:0007669"/>
    <property type="project" value="Ensembl"/>
</dbReference>
<dbReference type="GO" id="GO:0030008">
    <property type="term" value="C:TRAPP complex"/>
    <property type="evidence" value="ECO:0000314"/>
    <property type="project" value="UniProtKB"/>
</dbReference>
<dbReference type="GO" id="GO:1990071">
    <property type="term" value="C:TRAPPII protein complex"/>
    <property type="evidence" value="ECO:0000303"/>
    <property type="project" value="ComplexPortal"/>
</dbReference>
<dbReference type="GO" id="GO:1990072">
    <property type="term" value="C:TRAPPIII protein complex"/>
    <property type="evidence" value="ECO:0000303"/>
    <property type="project" value="ComplexPortal"/>
</dbReference>
<dbReference type="GO" id="GO:0048208">
    <property type="term" value="P:COPII vesicle coating"/>
    <property type="evidence" value="ECO:0000303"/>
    <property type="project" value="ComplexPortal"/>
</dbReference>
<dbReference type="GO" id="GO:0006888">
    <property type="term" value="P:endoplasmic reticulum to Golgi vesicle-mediated transport"/>
    <property type="evidence" value="ECO:0000318"/>
    <property type="project" value="GO_Central"/>
</dbReference>
<dbReference type="GO" id="GO:0006891">
    <property type="term" value="P:intra-Golgi vesicle-mediated transport"/>
    <property type="evidence" value="ECO:0000318"/>
    <property type="project" value="GO_Central"/>
</dbReference>
<dbReference type="GO" id="GO:0006901">
    <property type="term" value="P:vesicle coating"/>
    <property type="evidence" value="ECO:0000303"/>
    <property type="project" value="ComplexPortal"/>
</dbReference>
<dbReference type="GO" id="GO:0099022">
    <property type="term" value="P:vesicle tethering"/>
    <property type="evidence" value="ECO:0000303"/>
    <property type="project" value="ComplexPortal"/>
</dbReference>
<dbReference type="CDD" id="cd14942">
    <property type="entry name" value="TRAPPC3_bet3"/>
    <property type="match status" value="1"/>
</dbReference>
<dbReference type="FunFam" id="3.30.1380.20:FF:000003">
    <property type="entry name" value="Trafficking protein particle complex subunit"/>
    <property type="match status" value="1"/>
</dbReference>
<dbReference type="Gene3D" id="3.30.1380.20">
    <property type="entry name" value="Trafficking protein particle complex subunit 3"/>
    <property type="match status" value="1"/>
</dbReference>
<dbReference type="InterPro" id="IPR016721">
    <property type="entry name" value="Bet3"/>
</dbReference>
<dbReference type="InterPro" id="IPR024096">
    <property type="entry name" value="NO_sig/Golgi_transp_ligand-bd"/>
</dbReference>
<dbReference type="InterPro" id="IPR007194">
    <property type="entry name" value="TRAPP_component"/>
</dbReference>
<dbReference type="PANTHER" id="PTHR13048">
    <property type="entry name" value="TRAFFICKING PROTEIN PARTICLE COMPLEX SUBUNIT 3"/>
    <property type="match status" value="1"/>
</dbReference>
<dbReference type="Pfam" id="PF04051">
    <property type="entry name" value="TRAPP"/>
    <property type="match status" value="1"/>
</dbReference>
<dbReference type="PIRSF" id="PIRSF018293">
    <property type="entry name" value="TRAPP_I_complex_Bet3"/>
    <property type="match status" value="1"/>
</dbReference>
<dbReference type="SUPFAM" id="SSF111126">
    <property type="entry name" value="Ligand-binding domain in the NO signalling and Golgi transport"/>
    <property type="match status" value="1"/>
</dbReference>
<gene>
    <name evidence="9 11" type="primary">TRAPPC3</name>
    <name evidence="8" type="synonym">BET3</name>
    <name type="ORF">CDABP0066</name>
</gene>
<organism>
    <name type="scientific">Homo sapiens</name>
    <name type="common">Human</name>
    <dbReference type="NCBI Taxonomy" id="9606"/>
    <lineage>
        <taxon>Eukaryota</taxon>
        <taxon>Metazoa</taxon>
        <taxon>Chordata</taxon>
        <taxon>Craniata</taxon>
        <taxon>Vertebrata</taxon>
        <taxon>Euteleostomi</taxon>
        <taxon>Mammalia</taxon>
        <taxon>Eutheria</taxon>
        <taxon>Euarchontoglires</taxon>
        <taxon>Primates</taxon>
        <taxon>Haplorrhini</taxon>
        <taxon>Catarrhini</taxon>
        <taxon>Hominidae</taxon>
        <taxon>Homo</taxon>
    </lineage>
</organism>
<protein>
    <recommendedName>
        <fullName>Trafficking protein particle complex subunit 3</fullName>
    </recommendedName>
    <alternativeName>
        <fullName>BET3 homolog</fullName>
    </alternativeName>
</protein>
<feature type="chain" id="PRO_0000211572" description="Trafficking protein particle complex subunit 3">
    <location>
        <begin position="1"/>
        <end position="180"/>
    </location>
</feature>
<feature type="lipid moiety-binding region" description="S-palmitoyl cysteine" evidence="3">
    <location>
        <position position="68"/>
    </location>
</feature>
<feature type="splice variant" id="VSP_047015" description="In isoform 2." evidence="10">
    <location>
        <begin position="1"/>
        <end position="46"/>
    </location>
</feature>
<feature type="mutagenesis site" description="Impairs interaction with TRAPPC1." evidence="5">
    <original>DYE</original>
    <variation>KVR</variation>
    <location>
        <begin position="33"/>
        <end position="35"/>
    </location>
</feature>
<feature type="mutagenesis site" description="Loss of palmitoylation." evidence="3">
    <original>C</original>
    <variation>S</variation>
    <location>
        <position position="68"/>
    </location>
</feature>
<feature type="helix" evidence="12">
    <location>
        <begin position="17"/>
        <end position="34"/>
    </location>
</feature>
<feature type="helix" evidence="12">
    <location>
        <begin position="37"/>
        <end position="62"/>
    </location>
</feature>
<feature type="helix" evidence="12">
    <location>
        <begin position="71"/>
        <end position="80"/>
    </location>
</feature>
<feature type="helix" evidence="12">
    <location>
        <begin position="82"/>
        <end position="87"/>
    </location>
</feature>
<feature type="strand" evidence="12">
    <location>
        <begin position="92"/>
        <end position="94"/>
    </location>
</feature>
<feature type="strand" evidence="12">
    <location>
        <begin position="102"/>
        <end position="109"/>
    </location>
</feature>
<feature type="helix" evidence="12">
    <location>
        <begin position="120"/>
        <end position="122"/>
    </location>
</feature>
<feature type="turn" evidence="12">
    <location>
        <begin position="127"/>
        <end position="129"/>
    </location>
</feature>
<feature type="helix" evidence="12">
    <location>
        <begin position="130"/>
        <end position="140"/>
    </location>
</feature>
<feature type="turn" evidence="12">
    <location>
        <begin position="141"/>
        <end position="143"/>
    </location>
</feature>
<feature type="strand" evidence="12">
    <location>
        <begin position="144"/>
        <end position="152"/>
    </location>
</feature>
<feature type="helix" evidence="12">
    <location>
        <begin position="154"/>
        <end position="156"/>
    </location>
</feature>
<feature type="strand" evidence="12">
    <location>
        <begin position="159"/>
        <end position="170"/>
    </location>
</feature>
<accession>O43617</accession>
<accession>A6NDN0</accession>
<accession>B2RDN2</accession>
<accession>D3DPS2</accession>
<reference key="1">
    <citation type="journal article" date="1998" name="EMBO J.">
        <title>TRAPP, a highly conserved novel complex on the cis-Golgi that mediates vesicle docking and fusion.</title>
        <authorList>
            <person name="Sacher M."/>
            <person name="Jiang Y."/>
            <person name="Barrowman J."/>
            <person name="Scarpa A."/>
            <person name="Burston J."/>
            <person name="Zhang L."/>
            <person name="Schieltz D."/>
            <person name="Yates J.R. III"/>
            <person name="Abeliovich H."/>
            <person name="Ferro-Novick S."/>
        </authorList>
    </citation>
    <scope>NUCLEOTIDE SEQUENCE [MRNA] (ISOFORM 1)</scope>
    <source>
        <tissue>Placenta</tissue>
    </source>
</reference>
<reference key="2">
    <citation type="submission" date="1998-01" db="EMBL/GenBank/DDBJ databases">
        <authorList>
            <person name="Eva L."/>
            <person name="Subramaniam V.N."/>
            <person name="Hong W."/>
        </authorList>
    </citation>
    <scope>NUCLEOTIDE SEQUENCE [MRNA] (ISOFORM 1)</scope>
</reference>
<reference key="3">
    <citation type="submission" date="2000-07" db="EMBL/GenBank/DDBJ databases">
        <title>Pediatric leukemia cDNA sequencing project.</title>
        <authorList>
            <person name="Zhou J."/>
            <person name="Yu W."/>
            <person name="Tang H."/>
            <person name="Mei G."/>
            <person name="Tsang Y.T.M."/>
            <person name="Bouck J."/>
            <person name="Gibbs R.A."/>
            <person name="Margolin J.F."/>
        </authorList>
    </citation>
    <scope>NUCLEOTIDE SEQUENCE [LARGE SCALE MRNA] (ISOFORM 1)</scope>
    <source>
        <tissue>Leukemia</tissue>
    </source>
</reference>
<reference key="4">
    <citation type="journal article" date="2004" name="Nat. Genet.">
        <title>Complete sequencing and characterization of 21,243 full-length human cDNAs.</title>
        <authorList>
            <person name="Ota T."/>
            <person name="Suzuki Y."/>
            <person name="Nishikawa T."/>
            <person name="Otsuki T."/>
            <person name="Sugiyama T."/>
            <person name="Irie R."/>
            <person name="Wakamatsu A."/>
            <person name="Hayashi K."/>
            <person name="Sato H."/>
            <person name="Nagai K."/>
            <person name="Kimura K."/>
            <person name="Makita H."/>
            <person name="Sekine M."/>
            <person name="Obayashi M."/>
            <person name="Nishi T."/>
            <person name="Shibahara T."/>
            <person name="Tanaka T."/>
            <person name="Ishii S."/>
            <person name="Yamamoto J."/>
            <person name="Saito K."/>
            <person name="Kawai Y."/>
            <person name="Isono Y."/>
            <person name="Nakamura Y."/>
            <person name="Nagahari K."/>
            <person name="Murakami K."/>
            <person name="Yasuda T."/>
            <person name="Iwayanagi T."/>
            <person name="Wagatsuma M."/>
            <person name="Shiratori A."/>
            <person name="Sudo H."/>
            <person name="Hosoiri T."/>
            <person name="Kaku Y."/>
            <person name="Kodaira H."/>
            <person name="Kondo H."/>
            <person name="Sugawara M."/>
            <person name="Takahashi M."/>
            <person name="Kanda K."/>
            <person name="Yokoi T."/>
            <person name="Furuya T."/>
            <person name="Kikkawa E."/>
            <person name="Omura Y."/>
            <person name="Abe K."/>
            <person name="Kamihara K."/>
            <person name="Katsuta N."/>
            <person name="Sato K."/>
            <person name="Tanikawa M."/>
            <person name="Yamazaki M."/>
            <person name="Ninomiya K."/>
            <person name="Ishibashi T."/>
            <person name="Yamashita H."/>
            <person name="Murakawa K."/>
            <person name="Fujimori K."/>
            <person name="Tanai H."/>
            <person name="Kimata M."/>
            <person name="Watanabe M."/>
            <person name="Hiraoka S."/>
            <person name="Chiba Y."/>
            <person name="Ishida S."/>
            <person name="Ono Y."/>
            <person name="Takiguchi S."/>
            <person name="Watanabe S."/>
            <person name="Yosida M."/>
            <person name="Hotuta T."/>
            <person name="Kusano J."/>
            <person name="Kanehori K."/>
            <person name="Takahashi-Fujii A."/>
            <person name="Hara H."/>
            <person name="Tanase T.-O."/>
            <person name="Nomura Y."/>
            <person name="Togiya S."/>
            <person name="Komai F."/>
            <person name="Hara R."/>
            <person name="Takeuchi K."/>
            <person name="Arita M."/>
            <person name="Imose N."/>
            <person name="Musashino K."/>
            <person name="Yuuki H."/>
            <person name="Oshima A."/>
            <person name="Sasaki N."/>
            <person name="Aotsuka S."/>
            <person name="Yoshikawa Y."/>
            <person name="Matsunawa H."/>
            <person name="Ichihara T."/>
            <person name="Shiohata N."/>
            <person name="Sano S."/>
            <person name="Moriya S."/>
            <person name="Momiyama H."/>
            <person name="Satoh N."/>
            <person name="Takami S."/>
            <person name="Terashima Y."/>
            <person name="Suzuki O."/>
            <person name="Nakagawa S."/>
            <person name="Senoh A."/>
            <person name="Mizoguchi H."/>
            <person name="Goto Y."/>
            <person name="Shimizu F."/>
            <person name="Wakebe H."/>
            <person name="Hishigaki H."/>
            <person name="Watanabe T."/>
            <person name="Sugiyama A."/>
            <person name="Takemoto M."/>
            <person name="Kawakami B."/>
            <person name="Yamazaki M."/>
            <person name="Watanabe K."/>
            <person name="Kumagai A."/>
            <person name="Itakura S."/>
            <person name="Fukuzumi Y."/>
            <person name="Fujimori Y."/>
            <person name="Komiyama M."/>
            <person name="Tashiro H."/>
            <person name="Tanigami A."/>
            <person name="Fujiwara T."/>
            <person name="Ono T."/>
            <person name="Yamada K."/>
            <person name="Fujii Y."/>
            <person name="Ozaki K."/>
            <person name="Hirao M."/>
            <person name="Ohmori Y."/>
            <person name="Kawabata A."/>
            <person name="Hikiji T."/>
            <person name="Kobatake N."/>
            <person name="Inagaki H."/>
            <person name="Ikema Y."/>
            <person name="Okamoto S."/>
            <person name="Okitani R."/>
            <person name="Kawakami T."/>
            <person name="Noguchi S."/>
            <person name="Itoh T."/>
            <person name="Shigeta K."/>
            <person name="Senba T."/>
            <person name="Matsumura K."/>
            <person name="Nakajima Y."/>
            <person name="Mizuno T."/>
            <person name="Morinaga M."/>
            <person name="Sasaki M."/>
            <person name="Togashi T."/>
            <person name="Oyama M."/>
            <person name="Hata H."/>
            <person name="Watanabe M."/>
            <person name="Komatsu T."/>
            <person name="Mizushima-Sugano J."/>
            <person name="Satoh T."/>
            <person name="Shirai Y."/>
            <person name="Takahashi Y."/>
            <person name="Nakagawa K."/>
            <person name="Okumura K."/>
            <person name="Nagase T."/>
            <person name="Nomura N."/>
            <person name="Kikuchi H."/>
            <person name="Masuho Y."/>
            <person name="Yamashita R."/>
            <person name="Nakai K."/>
            <person name="Yada T."/>
            <person name="Nakamura Y."/>
            <person name="Ohara O."/>
            <person name="Isogai T."/>
            <person name="Sugano S."/>
        </authorList>
    </citation>
    <scope>NUCLEOTIDE SEQUENCE [LARGE SCALE MRNA] (ISOFORM 1)</scope>
    <source>
        <tissue>Skeletal muscle</tissue>
    </source>
</reference>
<reference key="5">
    <citation type="journal article" date="2006" name="Nature">
        <title>The DNA sequence and biological annotation of human chromosome 1.</title>
        <authorList>
            <person name="Gregory S.G."/>
            <person name="Barlow K.F."/>
            <person name="McLay K.E."/>
            <person name="Kaul R."/>
            <person name="Swarbreck D."/>
            <person name="Dunham A."/>
            <person name="Scott C.E."/>
            <person name="Howe K.L."/>
            <person name="Woodfine K."/>
            <person name="Spencer C.C.A."/>
            <person name="Jones M.C."/>
            <person name="Gillson C."/>
            <person name="Searle S."/>
            <person name="Zhou Y."/>
            <person name="Kokocinski F."/>
            <person name="McDonald L."/>
            <person name="Evans R."/>
            <person name="Phillips K."/>
            <person name="Atkinson A."/>
            <person name="Cooper R."/>
            <person name="Jones C."/>
            <person name="Hall R.E."/>
            <person name="Andrews T.D."/>
            <person name="Lloyd C."/>
            <person name="Ainscough R."/>
            <person name="Almeida J.P."/>
            <person name="Ambrose K.D."/>
            <person name="Anderson F."/>
            <person name="Andrew R.W."/>
            <person name="Ashwell R.I.S."/>
            <person name="Aubin K."/>
            <person name="Babbage A.K."/>
            <person name="Bagguley C.L."/>
            <person name="Bailey J."/>
            <person name="Beasley H."/>
            <person name="Bethel G."/>
            <person name="Bird C.P."/>
            <person name="Bray-Allen S."/>
            <person name="Brown J.Y."/>
            <person name="Brown A.J."/>
            <person name="Buckley D."/>
            <person name="Burton J."/>
            <person name="Bye J."/>
            <person name="Carder C."/>
            <person name="Chapman J.C."/>
            <person name="Clark S.Y."/>
            <person name="Clarke G."/>
            <person name="Clee C."/>
            <person name="Cobley V."/>
            <person name="Collier R.E."/>
            <person name="Corby N."/>
            <person name="Coville G.J."/>
            <person name="Davies J."/>
            <person name="Deadman R."/>
            <person name="Dunn M."/>
            <person name="Earthrowl M."/>
            <person name="Ellington A.G."/>
            <person name="Errington H."/>
            <person name="Frankish A."/>
            <person name="Frankland J."/>
            <person name="French L."/>
            <person name="Garner P."/>
            <person name="Garnett J."/>
            <person name="Gay L."/>
            <person name="Ghori M.R.J."/>
            <person name="Gibson R."/>
            <person name="Gilby L.M."/>
            <person name="Gillett W."/>
            <person name="Glithero R.J."/>
            <person name="Grafham D.V."/>
            <person name="Griffiths C."/>
            <person name="Griffiths-Jones S."/>
            <person name="Grocock R."/>
            <person name="Hammond S."/>
            <person name="Harrison E.S.I."/>
            <person name="Hart E."/>
            <person name="Haugen E."/>
            <person name="Heath P.D."/>
            <person name="Holmes S."/>
            <person name="Holt K."/>
            <person name="Howden P.J."/>
            <person name="Hunt A.R."/>
            <person name="Hunt S.E."/>
            <person name="Hunter G."/>
            <person name="Isherwood J."/>
            <person name="James R."/>
            <person name="Johnson C."/>
            <person name="Johnson D."/>
            <person name="Joy A."/>
            <person name="Kay M."/>
            <person name="Kershaw J.K."/>
            <person name="Kibukawa M."/>
            <person name="Kimberley A.M."/>
            <person name="King A."/>
            <person name="Knights A.J."/>
            <person name="Lad H."/>
            <person name="Laird G."/>
            <person name="Lawlor S."/>
            <person name="Leongamornlert D.A."/>
            <person name="Lloyd D.M."/>
            <person name="Loveland J."/>
            <person name="Lovell J."/>
            <person name="Lush M.J."/>
            <person name="Lyne R."/>
            <person name="Martin S."/>
            <person name="Mashreghi-Mohammadi M."/>
            <person name="Matthews L."/>
            <person name="Matthews N.S.W."/>
            <person name="McLaren S."/>
            <person name="Milne S."/>
            <person name="Mistry S."/>
            <person name="Moore M.J.F."/>
            <person name="Nickerson T."/>
            <person name="O'Dell C.N."/>
            <person name="Oliver K."/>
            <person name="Palmeiri A."/>
            <person name="Palmer S.A."/>
            <person name="Parker A."/>
            <person name="Patel D."/>
            <person name="Pearce A.V."/>
            <person name="Peck A.I."/>
            <person name="Pelan S."/>
            <person name="Phelps K."/>
            <person name="Phillimore B.J."/>
            <person name="Plumb R."/>
            <person name="Rajan J."/>
            <person name="Raymond C."/>
            <person name="Rouse G."/>
            <person name="Saenphimmachak C."/>
            <person name="Sehra H.K."/>
            <person name="Sheridan E."/>
            <person name="Shownkeen R."/>
            <person name="Sims S."/>
            <person name="Skuce C.D."/>
            <person name="Smith M."/>
            <person name="Steward C."/>
            <person name="Subramanian S."/>
            <person name="Sycamore N."/>
            <person name="Tracey A."/>
            <person name="Tromans A."/>
            <person name="Van Helmond Z."/>
            <person name="Wall M."/>
            <person name="Wallis J.M."/>
            <person name="White S."/>
            <person name="Whitehead S.L."/>
            <person name="Wilkinson J.E."/>
            <person name="Willey D.L."/>
            <person name="Williams H."/>
            <person name="Wilming L."/>
            <person name="Wray P.W."/>
            <person name="Wu Z."/>
            <person name="Coulson A."/>
            <person name="Vaudin M."/>
            <person name="Sulston J.E."/>
            <person name="Durbin R.M."/>
            <person name="Hubbard T."/>
            <person name="Wooster R."/>
            <person name="Dunham I."/>
            <person name="Carter N.P."/>
            <person name="McVean G."/>
            <person name="Ross M.T."/>
            <person name="Harrow J."/>
            <person name="Olson M.V."/>
            <person name="Beck S."/>
            <person name="Rogers J."/>
            <person name="Bentley D.R."/>
        </authorList>
    </citation>
    <scope>NUCLEOTIDE SEQUENCE [LARGE SCALE GENOMIC DNA]</scope>
</reference>
<reference key="6">
    <citation type="submission" date="2005-09" db="EMBL/GenBank/DDBJ databases">
        <authorList>
            <person name="Mural R.J."/>
            <person name="Istrail S."/>
            <person name="Sutton G.G."/>
            <person name="Florea L."/>
            <person name="Halpern A.L."/>
            <person name="Mobarry C.M."/>
            <person name="Lippert R."/>
            <person name="Walenz B."/>
            <person name="Shatkay H."/>
            <person name="Dew I."/>
            <person name="Miller J.R."/>
            <person name="Flanigan M.J."/>
            <person name="Edwards N.J."/>
            <person name="Bolanos R."/>
            <person name="Fasulo D."/>
            <person name="Halldorsson B.V."/>
            <person name="Hannenhalli S."/>
            <person name="Turner R."/>
            <person name="Yooseph S."/>
            <person name="Lu F."/>
            <person name="Nusskern D.R."/>
            <person name="Shue B.C."/>
            <person name="Zheng X.H."/>
            <person name="Zhong F."/>
            <person name="Delcher A.L."/>
            <person name="Huson D.H."/>
            <person name="Kravitz S.A."/>
            <person name="Mouchard L."/>
            <person name="Reinert K."/>
            <person name="Remington K.A."/>
            <person name="Clark A.G."/>
            <person name="Waterman M.S."/>
            <person name="Eichler E.E."/>
            <person name="Adams M.D."/>
            <person name="Hunkapiller M.W."/>
            <person name="Myers E.W."/>
            <person name="Venter J.C."/>
        </authorList>
    </citation>
    <scope>NUCLEOTIDE SEQUENCE [LARGE SCALE GENOMIC DNA]</scope>
</reference>
<reference key="7">
    <citation type="journal article" date="2004" name="Genome Res.">
        <title>The status, quality, and expansion of the NIH full-length cDNA project: the Mammalian Gene Collection (MGC).</title>
        <authorList>
            <consortium name="The MGC Project Team"/>
        </authorList>
    </citation>
    <scope>NUCLEOTIDE SEQUENCE [LARGE SCALE MRNA] (ISOFORM 1)</scope>
    <source>
        <tissue>Colon</tissue>
    </source>
</reference>
<reference key="8">
    <citation type="journal article" date="2002" name="Nature">
        <title>Functional organization of the yeast proteome by systematic analysis of protein complexes.</title>
        <authorList>
            <person name="Gavin A.-C."/>
            <person name="Boesche M."/>
            <person name="Krause R."/>
            <person name="Grandi P."/>
            <person name="Marzioch M."/>
            <person name="Bauer A."/>
            <person name="Schultz J."/>
            <person name="Rick J.M."/>
            <person name="Michon A.-M."/>
            <person name="Cruciat C.-M."/>
            <person name="Remor M."/>
            <person name="Hoefert C."/>
            <person name="Schelder M."/>
            <person name="Brajenovic M."/>
            <person name="Ruffner H."/>
            <person name="Merino A."/>
            <person name="Klein K."/>
            <person name="Hudak M."/>
            <person name="Dickson D."/>
            <person name="Rudi T."/>
            <person name="Gnau V."/>
            <person name="Bauch A."/>
            <person name="Bastuck S."/>
            <person name="Huhse B."/>
            <person name="Leutwein C."/>
            <person name="Heurtier M.-A."/>
            <person name="Copley R.R."/>
            <person name="Edelmann A."/>
            <person name="Querfurth E."/>
            <person name="Rybin V."/>
            <person name="Drewes G."/>
            <person name="Raida M."/>
            <person name="Bouwmeester T."/>
            <person name="Bork P."/>
            <person name="Seraphin B."/>
            <person name="Kuster B."/>
            <person name="Neubauer G."/>
            <person name="Superti-Furga G."/>
        </authorList>
    </citation>
    <scope>IDENTIFICATION IN TRAPP COMPLEX</scope>
</reference>
<reference key="9">
    <citation type="journal article" date="2009" name="Traffic">
        <title>TRAPPC2L is a novel, highly conserved TRAPP-interacting protein.</title>
        <authorList>
            <person name="Scrivens P.J."/>
            <person name="Shahrzad N."/>
            <person name="Moores A."/>
            <person name="Morin A."/>
            <person name="Brunet S."/>
            <person name="Sacher M."/>
        </authorList>
    </citation>
    <scope>IDENTIFICATION IN TRAPP COMPLEX</scope>
    <scope>INTERACTION WITH TRAPPC2L</scope>
</reference>
<reference key="10">
    <citation type="journal article" date="2011" name="BMC Syst. Biol.">
        <title>Initial characterization of the human central proteome.</title>
        <authorList>
            <person name="Burkard T.R."/>
            <person name="Planyavsky M."/>
            <person name="Kaupe I."/>
            <person name="Breitwieser F.P."/>
            <person name="Buerckstuemmer T."/>
            <person name="Bennett K.L."/>
            <person name="Superti-Furga G."/>
            <person name="Colinge J."/>
        </authorList>
    </citation>
    <scope>IDENTIFICATION BY MASS SPECTROMETRY [LARGE SCALE ANALYSIS]</scope>
</reference>
<reference key="11">
    <citation type="journal article" date="2011" name="Mol. Biol. Cell">
        <title>C4orf41 and TTC-15 are mammalian TRAPP components with a role at an early stage in ER-to-Golgi trafficking.</title>
        <authorList>
            <person name="Scrivens P.J."/>
            <person name="Noueihed B."/>
            <person name="Shahrzad N."/>
            <person name="Hul S."/>
            <person name="Brunet S."/>
            <person name="Sacher M."/>
        </authorList>
    </citation>
    <scope>IDENTIFICATION IN TRAPP COMPLEX</scope>
</reference>
<reference key="12">
    <citation type="journal article" date="2014" name="J. Proteomics">
        <title>An enzyme assisted RP-RPLC approach for in-depth analysis of human liver phosphoproteome.</title>
        <authorList>
            <person name="Bian Y."/>
            <person name="Song C."/>
            <person name="Cheng K."/>
            <person name="Dong M."/>
            <person name="Wang F."/>
            <person name="Huang J."/>
            <person name="Sun D."/>
            <person name="Wang L."/>
            <person name="Ye M."/>
            <person name="Zou H."/>
        </authorList>
    </citation>
    <scope>IDENTIFICATION BY MASS SPECTROMETRY [LARGE SCALE ANALYSIS]</scope>
    <source>
        <tissue>Liver</tissue>
    </source>
</reference>
<reference key="13">
    <citation type="journal article" date="2015" name="Proteomics">
        <title>N-terminome analysis of the human mitochondrial proteome.</title>
        <authorList>
            <person name="Vaca Jacome A.S."/>
            <person name="Rabilloud T."/>
            <person name="Schaeffer-Reiss C."/>
            <person name="Rompais M."/>
            <person name="Ayoub D."/>
            <person name="Lane L."/>
            <person name="Bairoch A."/>
            <person name="Van Dorsselaer A."/>
            <person name="Carapito C."/>
        </authorList>
    </citation>
    <scope>IDENTIFICATION BY MASS SPECTROMETRY [LARGE SCALE ANALYSIS]</scope>
</reference>
<reference key="14">
    <citation type="journal article" date="2005" name="EMBO J.">
        <title>Structure of palmitoylated BET3: insights into TRAPP complex assembly and membrane localization.</title>
        <authorList>
            <person name="Turnbull A.P."/>
            <person name="Kummel D."/>
            <person name="Prinz B."/>
            <person name="Holz C."/>
            <person name="Schultchen J."/>
            <person name="Lang C."/>
            <person name="Niesen F.H."/>
            <person name="Hofmann K.P."/>
            <person name="Delbruck H."/>
            <person name="Behlke J."/>
            <person name="Muller E.C."/>
            <person name="Jarosch E."/>
            <person name="Sommer T."/>
            <person name="Heinemann U."/>
        </authorList>
    </citation>
    <scope>X-RAY CRYSTALLOGRAPHY (1.55 ANGSTROMS) OF 2-180</scope>
    <scope>SUBUNIT</scope>
    <scope>MUTAGENESIS OF CYS-68</scope>
    <scope>PALMITOYLATION AT CYS-68</scope>
</reference>
<reference key="15">
    <citation type="journal article" date="2005" name="Traffic">
        <title>Biochemical and crystallographic studies reveal a specific interaction between TRAPP subunits Trs33p and Bet3p.</title>
        <authorList>
            <person name="Kim M.-S."/>
            <person name="Yi M.-J."/>
            <person name="Lee K.-H."/>
            <person name="Wagner J."/>
            <person name="Munger C."/>
            <person name="Kim Y.-G."/>
            <person name="Whiteway M."/>
            <person name="Cygler M."/>
            <person name="Oh B.-H."/>
            <person name="Sacher M."/>
        </authorList>
    </citation>
    <scope>X-RAY CRYSTALLOGRAPHY (2.2 ANGSTROMS) OF 15-175 IN COMPLEX WITH TRAPPC6A</scope>
</reference>
<reference key="16">
    <citation type="journal article" date="2006" name="J. Mol. Biol.">
        <title>Structure of the Bet3-Tpc6B core of TRAPP: two Tpc6 paralogs form trimeric complexes with Bet3 and Mum2.</title>
        <authorList>
            <person name="Kummel D."/>
            <person name="Muller J.J."/>
            <person name="Roske Y."/>
            <person name="Henke N."/>
            <person name="Heinemann U."/>
        </authorList>
    </citation>
    <scope>X-RAY CRYSTALLOGRAPHY (2.30 ANGSTROMS) IN COMPLEX WITH TRAPPC6B</scope>
    <scope>SUBUNIT</scope>
    <scope>INTERACTION WITH TRAPPC6B AND TRAPPC1</scope>
    <scope>MUTAGENESIS OF 33-ASP--GLU-35</scope>
</reference>
<proteinExistence type="evidence at protein level"/>
<sequence>MSRQANRGTESKKMSSELFTLTYGALVTQLCKDYENDEDVNKQLDKMGFNIGVRLIEDFLARSNVGRCHDFRETADVIAKVAFKMYLGITPSITNWSPAGDEFSLILENNPLVDFVELPDNHSSLIYSNLLCGVLRGALEMVQMAVEAKFVQDTLKGDGVTEIRMRFIRRIEDNLPAGEE</sequence>
<evidence type="ECO:0000250" key="1"/>
<evidence type="ECO:0000269" key="2">
    <source>
    </source>
</evidence>
<evidence type="ECO:0000269" key="3">
    <source>
    </source>
</evidence>
<evidence type="ECO:0000269" key="4">
    <source>
    </source>
</evidence>
<evidence type="ECO:0000269" key="5">
    <source>
    </source>
</evidence>
<evidence type="ECO:0000269" key="6">
    <source>
    </source>
</evidence>
<evidence type="ECO:0000269" key="7">
    <source>
    </source>
</evidence>
<evidence type="ECO:0000303" key="8">
    <source>
    </source>
</evidence>
<evidence type="ECO:0000303" key="9">
    <source>
    </source>
</evidence>
<evidence type="ECO:0000305" key="10"/>
<evidence type="ECO:0000312" key="11">
    <source>
        <dbReference type="HGNC" id="HGNC:19942"/>
    </source>
</evidence>
<evidence type="ECO:0007829" key="12">
    <source>
        <dbReference type="PDB" id="1SZ7"/>
    </source>
</evidence>